<gene>
    <name evidence="1" type="primary">glyQ</name>
    <name type="ordered locus">ZMO1446</name>
</gene>
<feature type="chain" id="PRO_1000047537" description="Glycine--tRNA ligase alpha subunit">
    <location>
        <begin position="1"/>
        <end position="290"/>
    </location>
</feature>
<sequence length="290" mass="33047">MPDSLSFQALILKLHDYWSQQGCVILQPYDMEMGAGTFHPATSLKALGPNPWKAAYVQPCRRPADGRYGENPNRLCHYYQYQVILKPSPDNIQALYLGSLEAIGIDLSRHDIRFVEDDWESPTLGAWGLGWEVWCDGMEVTQFTYFQQIGGFDCKPVSGEITYGLERLAMYIQGVDNVYDLRFNDAGVSYGDVFLENERQFSAYNFEAANTETLFRWFKEASQECKALLERDKPLPLPAYDQAIKASHIFNLLQSRGMISVTERQAYIGRVRELTKAVAAAWMAYNGWEA</sequence>
<reference key="1">
    <citation type="journal article" date="2005" name="Nat. Biotechnol.">
        <title>The genome sequence of the ethanologenic bacterium Zymomonas mobilis ZM4.</title>
        <authorList>
            <person name="Seo J.-S."/>
            <person name="Chong H."/>
            <person name="Park H.S."/>
            <person name="Yoon K.-O."/>
            <person name="Jung C."/>
            <person name="Kim J.J."/>
            <person name="Hong J.H."/>
            <person name="Kim H."/>
            <person name="Kim J.-H."/>
            <person name="Kil J.-I."/>
            <person name="Park C.J."/>
            <person name="Oh H.-M."/>
            <person name="Lee J.-S."/>
            <person name="Jin S.-J."/>
            <person name="Um H.-W."/>
            <person name="Lee H.-J."/>
            <person name="Oh S.-J."/>
            <person name="Kim J.Y."/>
            <person name="Kang H.L."/>
            <person name="Lee S.Y."/>
            <person name="Lee K.J."/>
            <person name="Kang H.S."/>
        </authorList>
    </citation>
    <scope>NUCLEOTIDE SEQUENCE [LARGE SCALE GENOMIC DNA]</scope>
    <source>
        <strain>ATCC 31821 / ZM4 / CP4</strain>
    </source>
</reference>
<protein>
    <recommendedName>
        <fullName evidence="1">Glycine--tRNA ligase alpha subunit</fullName>
        <ecNumber evidence="1">6.1.1.14</ecNumber>
    </recommendedName>
    <alternativeName>
        <fullName evidence="1">Glycyl-tRNA synthetase alpha subunit</fullName>
        <shortName evidence="1">GlyRS</shortName>
    </alternativeName>
</protein>
<organism>
    <name type="scientific">Zymomonas mobilis subsp. mobilis (strain ATCC 31821 / ZM4 / CP4)</name>
    <dbReference type="NCBI Taxonomy" id="264203"/>
    <lineage>
        <taxon>Bacteria</taxon>
        <taxon>Pseudomonadati</taxon>
        <taxon>Pseudomonadota</taxon>
        <taxon>Alphaproteobacteria</taxon>
        <taxon>Sphingomonadales</taxon>
        <taxon>Zymomonadaceae</taxon>
        <taxon>Zymomonas</taxon>
    </lineage>
</organism>
<name>SYGA_ZYMMO</name>
<comment type="catalytic activity">
    <reaction evidence="1">
        <text>tRNA(Gly) + glycine + ATP = glycyl-tRNA(Gly) + AMP + diphosphate</text>
        <dbReference type="Rhea" id="RHEA:16013"/>
        <dbReference type="Rhea" id="RHEA-COMP:9664"/>
        <dbReference type="Rhea" id="RHEA-COMP:9683"/>
        <dbReference type="ChEBI" id="CHEBI:30616"/>
        <dbReference type="ChEBI" id="CHEBI:33019"/>
        <dbReference type="ChEBI" id="CHEBI:57305"/>
        <dbReference type="ChEBI" id="CHEBI:78442"/>
        <dbReference type="ChEBI" id="CHEBI:78522"/>
        <dbReference type="ChEBI" id="CHEBI:456215"/>
        <dbReference type="EC" id="6.1.1.14"/>
    </reaction>
</comment>
<comment type="subunit">
    <text evidence="1">Tetramer of two alpha and two beta subunits.</text>
</comment>
<comment type="subcellular location">
    <subcellularLocation>
        <location evidence="1">Cytoplasm</location>
    </subcellularLocation>
</comment>
<comment type="similarity">
    <text evidence="1">Belongs to the class-II aminoacyl-tRNA synthetase family.</text>
</comment>
<evidence type="ECO:0000255" key="1">
    <source>
        <dbReference type="HAMAP-Rule" id="MF_00254"/>
    </source>
</evidence>
<proteinExistence type="inferred from homology"/>
<dbReference type="EC" id="6.1.1.14" evidence="1"/>
<dbReference type="EMBL" id="AE008692">
    <property type="protein sequence ID" value="AAV90070.1"/>
    <property type="molecule type" value="Genomic_DNA"/>
</dbReference>
<dbReference type="RefSeq" id="WP_011241226.1">
    <property type="nucleotide sequence ID" value="NZ_CP035711.1"/>
</dbReference>
<dbReference type="SMR" id="Q5NMJ1"/>
<dbReference type="STRING" id="264203.ZMO1446"/>
<dbReference type="KEGG" id="zmo:ZMO1446"/>
<dbReference type="eggNOG" id="COG0752">
    <property type="taxonomic scope" value="Bacteria"/>
</dbReference>
<dbReference type="HOGENOM" id="CLU_057066_1_0_5"/>
<dbReference type="Proteomes" id="UP000001173">
    <property type="component" value="Chromosome"/>
</dbReference>
<dbReference type="GO" id="GO:0005829">
    <property type="term" value="C:cytosol"/>
    <property type="evidence" value="ECO:0007669"/>
    <property type="project" value="TreeGrafter"/>
</dbReference>
<dbReference type="GO" id="GO:0005524">
    <property type="term" value="F:ATP binding"/>
    <property type="evidence" value="ECO:0007669"/>
    <property type="project" value="UniProtKB-UniRule"/>
</dbReference>
<dbReference type="GO" id="GO:0004820">
    <property type="term" value="F:glycine-tRNA ligase activity"/>
    <property type="evidence" value="ECO:0007669"/>
    <property type="project" value="UniProtKB-UniRule"/>
</dbReference>
<dbReference type="GO" id="GO:0006426">
    <property type="term" value="P:glycyl-tRNA aminoacylation"/>
    <property type="evidence" value="ECO:0007669"/>
    <property type="project" value="UniProtKB-UniRule"/>
</dbReference>
<dbReference type="CDD" id="cd00733">
    <property type="entry name" value="GlyRS_alpha_core"/>
    <property type="match status" value="1"/>
</dbReference>
<dbReference type="FunFam" id="3.30.930.10:FF:000006">
    <property type="entry name" value="Glycine--tRNA ligase alpha subunit"/>
    <property type="match status" value="1"/>
</dbReference>
<dbReference type="Gene3D" id="3.30.930.10">
    <property type="entry name" value="Bira Bifunctional Protein, Domain 2"/>
    <property type="match status" value="1"/>
</dbReference>
<dbReference type="Gene3D" id="1.20.58.180">
    <property type="entry name" value="Class II aaRS and biotin synthetases, domain 2"/>
    <property type="match status" value="1"/>
</dbReference>
<dbReference type="HAMAP" id="MF_00254">
    <property type="entry name" value="Gly_tRNA_synth_alpha"/>
    <property type="match status" value="1"/>
</dbReference>
<dbReference type="InterPro" id="IPR045864">
    <property type="entry name" value="aa-tRNA-synth_II/BPL/LPL"/>
</dbReference>
<dbReference type="InterPro" id="IPR006194">
    <property type="entry name" value="Gly-tRNA-synth_heterodimer"/>
</dbReference>
<dbReference type="InterPro" id="IPR002310">
    <property type="entry name" value="Gly-tRNA_ligase_asu"/>
</dbReference>
<dbReference type="NCBIfam" id="TIGR00388">
    <property type="entry name" value="glyQ"/>
    <property type="match status" value="1"/>
</dbReference>
<dbReference type="NCBIfam" id="NF006827">
    <property type="entry name" value="PRK09348.1"/>
    <property type="match status" value="1"/>
</dbReference>
<dbReference type="PANTHER" id="PTHR30075:SF2">
    <property type="entry name" value="GLYCINE--TRNA LIGASE, CHLOROPLASTIC_MITOCHONDRIAL 2"/>
    <property type="match status" value="1"/>
</dbReference>
<dbReference type="PANTHER" id="PTHR30075">
    <property type="entry name" value="GLYCYL-TRNA SYNTHETASE"/>
    <property type="match status" value="1"/>
</dbReference>
<dbReference type="Pfam" id="PF02091">
    <property type="entry name" value="tRNA-synt_2e"/>
    <property type="match status" value="1"/>
</dbReference>
<dbReference type="PRINTS" id="PR01044">
    <property type="entry name" value="TRNASYNTHGA"/>
</dbReference>
<dbReference type="SUPFAM" id="SSF55681">
    <property type="entry name" value="Class II aaRS and biotin synthetases"/>
    <property type="match status" value="1"/>
</dbReference>
<dbReference type="PROSITE" id="PS50861">
    <property type="entry name" value="AA_TRNA_LIGASE_II_GLYAB"/>
    <property type="match status" value="1"/>
</dbReference>
<keyword id="KW-0030">Aminoacyl-tRNA synthetase</keyword>
<keyword id="KW-0067">ATP-binding</keyword>
<keyword id="KW-0963">Cytoplasm</keyword>
<keyword id="KW-0436">Ligase</keyword>
<keyword id="KW-0547">Nucleotide-binding</keyword>
<keyword id="KW-0648">Protein biosynthesis</keyword>
<keyword id="KW-1185">Reference proteome</keyword>
<accession>Q5NMJ1</accession>